<proteinExistence type="inferred from homology"/>
<comment type="function">
    <text evidence="1">May act as a double-stranded DNA (dsDNA) mimic. Probably regulates the activity of a dsDNA-binding protein.</text>
</comment>
<comment type="similarity">
    <text evidence="1">Belongs to the putative dsDNA mimic protein family.</text>
</comment>
<gene>
    <name evidence="1" type="primary">yciU</name>
    <name type="ordered locus">SPAB_01503</name>
</gene>
<reference key="1">
    <citation type="submission" date="2007-11" db="EMBL/GenBank/DDBJ databases">
        <authorList>
            <consortium name="The Salmonella enterica serovar Paratyphi B Genome Sequencing Project"/>
            <person name="McClelland M."/>
            <person name="Sanderson E.K."/>
            <person name="Porwollik S."/>
            <person name="Spieth J."/>
            <person name="Clifton W.S."/>
            <person name="Fulton R."/>
            <person name="Cordes M."/>
            <person name="Wollam A."/>
            <person name="Shah N."/>
            <person name="Pepin K."/>
            <person name="Bhonagiri V."/>
            <person name="Nash W."/>
            <person name="Johnson M."/>
            <person name="Thiruvilangam P."/>
            <person name="Wilson R."/>
        </authorList>
    </citation>
    <scope>NUCLEOTIDE SEQUENCE [LARGE SCALE GENOMIC DNA]</scope>
    <source>
        <strain>ATCC BAA-1250 / SPB7</strain>
    </source>
</reference>
<organism>
    <name type="scientific">Salmonella paratyphi B (strain ATCC BAA-1250 / SPB7)</name>
    <dbReference type="NCBI Taxonomy" id="1016998"/>
    <lineage>
        <taxon>Bacteria</taxon>
        <taxon>Pseudomonadati</taxon>
        <taxon>Pseudomonadota</taxon>
        <taxon>Gammaproteobacteria</taxon>
        <taxon>Enterobacterales</taxon>
        <taxon>Enterobacteriaceae</taxon>
        <taxon>Salmonella</taxon>
    </lineage>
</organism>
<feature type="chain" id="PRO_1000082993" description="Putative double-stranded DNA mimic protein YciU">
    <location>
        <begin position="1"/>
        <end position="109"/>
    </location>
</feature>
<protein>
    <recommendedName>
        <fullName evidence="1">Putative double-stranded DNA mimic protein YciU</fullName>
    </recommendedName>
</protein>
<name>YCIU_SALPB</name>
<evidence type="ECO:0000255" key="1">
    <source>
        <dbReference type="HAMAP-Rule" id="MF_00680"/>
    </source>
</evidence>
<accession>A9MWP8</accession>
<dbReference type="EMBL" id="CP000886">
    <property type="protein sequence ID" value="ABX66901.1"/>
    <property type="molecule type" value="Genomic_DNA"/>
</dbReference>
<dbReference type="RefSeq" id="WP_000425069.1">
    <property type="nucleotide sequence ID" value="NC_010102.1"/>
</dbReference>
<dbReference type="SMR" id="A9MWP8"/>
<dbReference type="KEGG" id="spq:SPAB_01503"/>
<dbReference type="PATRIC" id="fig|1016998.12.peg.1411"/>
<dbReference type="HOGENOM" id="CLU_143392_0_0_6"/>
<dbReference type="BioCyc" id="SENT1016998:SPAB_RS06110-MONOMER"/>
<dbReference type="Proteomes" id="UP000008556">
    <property type="component" value="Chromosome"/>
</dbReference>
<dbReference type="Gene3D" id="3.10.450.140">
    <property type="entry name" value="dsDNA mimic, putative"/>
    <property type="match status" value="1"/>
</dbReference>
<dbReference type="HAMAP" id="MF_00680">
    <property type="entry name" value="Put_dsDNA_mimic"/>
    <property type="match status" value="1"/>
</dbReference>
<dbReference type="InterPro" id="IPR007376">
    <property type="entry name" value="dsDNA_mimic_put"/>
</dbReference>
<dbReference type="InterPro" id="IPR036763">
    <property type="entry name" value="Put_dsDNA_mimic_sf"/>
</dbReference>
<dbReference type="NCBIfam" id="NF003469">
    <property type="entry name" value="PRK05094.1"/>
    <property type="match status" value="1"/>
</dbReference>
<dbReference type="Pfam" id="PF04269">
    <property type="entry name" value="DUF440"/>
    <property type="match status" value="1"/>
</dbReference>
<dbReference type="PIRSF" id="PIRSF004916">
    <property type="entry name" value="UCP004916"/>
    <property type="match status" value="1"/>
</dbReference>
<dbReference type="SUPFAM" id="SSF102816">
    <property type="entry name" value="Putative dsDNA mimic"/>
    <property type="match status" value="1"/>
</dbReference>
<sequence>MEMDLNNRLTEDETLEQAYDIFLELAADNLDPADIILFNLQFEERGGAELFDPAEDWQEHIDFDLNPDFFAEVVIGLADTEDGEINDIFARVLLCREKDHKLCHILWRE</sequence>